<reference key="1">
    <citation type="journal article" date="2003" name="Genome Res.">
        <title>Comparative genome analysis of Vibrio vulnificus, a marine pathogen.</title>
        <authorList>
            <person name="Chen C.-Y."/>
            <person name="Wu K.-M."/>
            <person name="Chang Y.-C."/>
            <person name="Chang C.-H."/>
            <person name="Tsai H.-C."/>
            <person name="Liao T.-L."/>
            <person name="Liu Y.-M."/>
            <person name="Chen H.-J."/>
            <person name="Shen A.B.-T."/>
            <person name="Li J.-C."/>
            <person name="Su T.-L."/>
            <person name="Shao C.-P."/>
            <person name="Lee C.-T."/>
            <person name="Hor L.-I."/>
            <person name="Tsai S.-F."/>
        </authorList>
    </citation>
    <scope>NUCLEOTIDE SEQUENCE [LARGE SCALE GENOMIC DNA]</scope>
    <source>
        <strain>YJ016</strain>
    </source>
</reference>
<keyword id="KW-0133">Cell shape</keyword>
<keyword id="KW-0961">Cell wall biogenesis/degradation</keyword>
<keyword id="KW-0413">Isomerase</keyword>
<keyword id="KW-0573">Peptidoglycan synthesis</keyword>
<proteinExistence type="inferred from homology"/>
<protein>
    <recommendedName>
        <fullName evidence="1">Glutamate racemase</fullName>
        <ecNumber evidence="1">5.1.1.3</ecNumber>
    </recommendedName>
</protein>
<evidence type="ECO:0000255" key="1">
    <source>
        <dbReference type="HAMAP-Rule" id="MF_00258"/>
    </source>
</evidence>
<sequence length="263" mass="29126">MESSNQPNVLIFDSGVGGLSVFQEINKRLPEVNYYYLFDNQAYPYGELSQETLLARVEALVVKMTQQFAIDLVVIACNTASTIVLPALRAKLPIPVVGVVPAIKPASLLANRAVGLIATPATVTRQYTHDLIRDFAHEKEVELLGSTRLVDIAEEKLRGRQVDQQELAMILKPMKHKVDVAVLGCTHFPLLKEEIQQVLGDEIILVDSGEAIARRVQSLLHQLSPQSTKTPWRIFSTAQPWDEAALNGSLKTMGFNAIELYPL</sequence>
<dbReference type="EC" id="5.1.1.3" evidence="1"/>
<dbReference type="EMBL" id="BA000037">
    <property type="protein sequence ID" value="BAC92932.1"/>
    <property type="molecule type" value="Genomic_DNA"/>
</dbReference>
<dbReference type="RefSeq" id="WP_011149175.1">
    <property type="nucleotide sequence ID" value="NC_005139.1"/>
</dbReference>
<dbReference type="SMR" id="Q7MQ40"/>
<dbReference type="STRING" id="672.VV93_v1c01560"/>
<dbReference type="KEGG" id="vvy:VV0168"/>
<dbReference type="PATRIC" id="fig|196600.6.peg.211"/>
<dbReference type="eggNOG" id="COG0796">
    <property type="taxonomic scope" value="Bacteria"/>
</dbReference>
<dbReference type="HOGENOM" id="CLU_052344_2_0_6"/>
<dbReference type="UniPathway" id="UPA00219"/>
<dbReference type="Proteomes" id="UP000002675">
    <property type="component" value="Chromosome I"/>
</dbReference>
<dbReference type="GO" id="GO:0008881">
    <property type="term" value="F:glutamate racemase activity"/>
    <property type="evidence" value="ECO:0007669"/>
    <property type="project" value="UniProtKB-UniRule"/>
</dbReference>
<dbReference type="GO" id="GO:0071555">
    <property type="term" value="P:cell wall organization"/>
    <property type="evidence" value="ECO:0007669"/>
    <property type="project" value="UniProtKB-KW"/>
</dbReference>
<dbReference type="GO" id="GO:0009252">
    <property type="term" value="P:peptidoglycan biosynthetic process"/>
    <property type="evidence" value="ECO:0007669"/>
    <property type="project" value="UniProtKB-UniRule"/>
</dbReference>
<dbReference type="GO" id="GO:0008360">
    <property type="term" value="P:regulation of cell shape"/>
    <property type="evidence" value="ECO:0007669"/>
    <property type="project" value="UniProtKB-KW"/>
</dbReference>
<dbReference type="FunFam" id="3.40.50.1860:FF:000001">
    <property type="entry name" value="Glutamate racemase"/>
    <property type="match status" value="1"/>
</dbReference>
<dbReference type="Gene3D" id="3.40.50.1860">
    <property type="match status" value="2"/>
</dbReference>
<dbReference type="HAMAP" id="MF_00258">
    <property type="entry name" value="Glu_racemase"/>
    <property type="match status" value="1"/>
</dbReference>
<dbReference type="InterPro" id="IPR015942">
    <property type="entry name" value="Asp/Glu/hydantoin_racemase"/>
</dbReference>
<dbReference type="InterPro" id="IPR001920">
    <property type="entry name" value="Asp/Glu_race"/>
</dbReference>
<dbReference type="InterPro" id="IPR018187">
    <property type="entry name" value="Asp/Glu_racemase_AS_1"/>
</dbReference>
<dbReference type="InterPro" id="IPR004391">
    <property type="entry name" value="Glu_race"/>
</dbReference>
<dbReference type="NCBIfam" id="TIGR00067">
    <property type="entry name" value="glut_race"/>
    <property type="match status" value="1"/>
</dbReference>
<dbReference type="PANTHER" id="PTHR21198">
    <property type="entry name" value="GLUTAMATE RACEMASE"/>
    <property type="match status" value="1"/>
</dbReference>
<dbReference type="PANTHER" id="PTHR21198:SF2">
    <property type="entry name" value="GLUTAMATE RACEMASE"/>
    <property type="match status" value="1"/>
</dbReference>
<dbReference type="Pfam" id="PF01177">
    <property type="entry name" value="Asp_Glu_race"/>
    <property type="match status" value="1"/>
</dbReference>
<dbReference type="SUPFAM" id="SSF53681">
    <property type="entry name" value="Aspartate/glutamate racemase"/>
    <property type="match status" value="2"/>
</dbReference>
<dbReference type="PROSITE" id="PS00923">
    <property type="entry name" value="ASP_GLU_RACEMASE_1"/>
    <property type="match status" value="1"/>
</dbReference>
<organism>
    <name type="scientific">Vibrio vulnificus (strain YJ016)</name>
    <dbReference type="NCBI Taxonomy" id="196600"/>
    <lineage>
        <taxon>Bacteria</taxon>
        <taxon>Pseudomonadati</taxon>
        <taxon>Pseudomonadota</taxon>
        <taxon>Gammaproteobacteria</taxon>
        <taxon>Vibrionales</taxon>
        <taxon>Vibrionaceae</taxon>
        <taxon>Vibrio</taxon>
    </lineage>
</organism>
<accession>Q7MQ40</accession>
<name>MURI_VIBVY</name>
<gene>
    <name evidence="1" type="primary">murI</name>
    <name type="ordered locus">VV0168</name>
</gene>
<feature type="chain" id="PRO_0000095533" description="Glutamate racemase">
    <location>
        <begin position="1"/>
        <end position="263"/>
    </location>
</feature>
<feature type="active site" description="Proton donor/acceptor" evidence="1">
    <location>
        <position position="77"/>
    </location>
</feature>
<feature type="active site" description="Proton donor/acceptor" evidence="1">
    <location>
        <position position="185"/>
    </location>
</feature>
<feature type="binding site" evidence="1">
    <location>
        <begin position="13"/>
        <end position="14"/>
    </location>
    <ligand>
        <name>substrate</name>
    </ligand>
</feature>
<feature type="binding site" evidence="1">
    <location>
        <begin position="45"/>
        <end position="46"/>
    </location>
    <ligand>
        <name>substrate</name>
    </ligand>
</feature>
<feature type="binding site" evidence="1">
    <location>
        <begin position="78"/>
        <end position="79"/>
    </location>
    <ligand>
        <name>substrate</name>
    </ligand>
</feature>
<feature type="binding site" evidence="1">
    <location>
        <begin position="186"/>
        <end position="187"/>
    </location>
    <ligand>
        <name>substrate</name>
    </ligand>
</feature>
<comment type="function">
    <text evidence="1">Provides the (R)-glutamate required for cell wall biosynthesis.</text>
</comment>
<comment type="catalytic activity">
    <reaction evidence="1">
        <text>L-glutamate = D-glutamate</text>
        <dbReference type="Rhea" id="RHEA:12813"/>
        <dbReference type="ChEBI" id="CHEBI:29985"/>
        <dbReference type="ChEBI" id="CHEBI:29986"/>
        <dbReference type="EC" id="5.1.1.3"/>
    </reaction>
</comment>
<comment type="pathway">
    <text evidence="1">Cell wall biogenesis; peptidoglycan biosynthesis.</text>
</comment>
<comment type="similarity">
    <text evidence="1">Belongs to the aspartate/glutamate racemases family.</text>
</comment>